<evidence type="ECO:0000256" key="1">
    <source>
        <dbReference type="SAM" id="MobiDB-lite"/>
    </source>
</evidence>
<evidence type="ECO:0000269" key="2">
    <source>
    </source>
</evidence>
<evidence type="ECO:0000269" key="3">
    <source>
    </source>
</evidence>
<evidence type="ECO:0000269" key="4">
    <source>
    </source>
</evidence>
<evidence type="ECO:0000269" key="5">
    <source>
    </source>
</evidence>
<evidence type="ECO:0000269" key="6">
    <source>
    </source>
</evidence>
<evidence type="ECO:0000269" key="7">
    <source>
    </source>
</evidence>
<evidence type="ECO:0000269" key="8">
    <source>
    </source>
</evidence>
<evidence type="ECO:0000269" key="9">
    <source>
    </source>
</evidence>
<evidence type="ECO:0000269" key="10">
    <source>
    </source>
</evidence>
<evidence type="ECO:0000269" key="11">
    <source>
    </source>
</evidence>
<evidence type="ECO:0000269" key="12">
    <source>
    </source>
</evidence>
<evidence type="ECO:0000269" key="13">
    <source>
    </source>
</evidence>
<evidence type="ECO:0000269" key="14">
    <source>
    </source>
</evidence>
<evidence type="ECO:0000305" key="15"/>
<evidence type="ECO:0000312" key="16">
    <source>
        <dbReference type="FlyBase" id="FBgn0000158"/>
    </source>
</evidence>
<evidence type="ECO:0000312" key="17">
    <source>
        <dbReference type="Proteomes" id="UP000000803"/>
    </source>
</evidence>
<evidence type="ECO:0007829" key="18">
    <source>
        <dbReference type="PDB" id="5ONA"/>
    </source>
</evidence>
<protein>
    <recommendedName>
        <fullName evidence="16">Protein bag of marbles</fullName>
    </recommendedName>
</protein>
<gene>
    <name evidence="16" type="primary">bam</name>
    <name evidence="16" type="ORF">CG10422</name>
</gene>
<reference key="1">
    <citation type="journal article" date="1990" name="Genes Dev.">
        <title>Bag-of-marbles: a Drosophila gene required to initiate both male and female gametogenesis.</title>
        <authorList>
            <person name="McKearin D.M."/>
            <person name="Spradling A.C."/>
        </authorList>
    </citation>
    <scope>NUCLEOTIDE SEQUENCE [GENOMIC DNA]</scope>
    <scope>FUNCTION</scope>
    <scope>TISSUE SPECIFICITY</scope>
    <scope>VARIANT SER-239</scope>
    <scope>DISRUPTION PHENOTYPE</scope>
    <source>
        <strain>fs(3)Neo61</strain>
        <tissue>Ovary</tissue>
    </source>
</reference>
<reference key="2">
    <citation type="submission" date="1998-11" db="EMBL/GenBank/DDBJ databases">
        <authorList>
            <person name="McKearin D.M."/>
        </authorList>
    </citation>
    <scope>SEQUENCE REVISION TO 99-113</scope>
</reference>
<reference key="3">
    <citation type="journal article" date="2006" name="Mol. Biol. Evol.">
        <title>Rapid evolution and gene-specific patterns of selection for three genes of spermatogenesis in Drosophila.</title>
        <authorList>
            <person name="Civetta A."/>
            <person name="Rajakumar S.A."/>
            <person name="Brouwers B."/>
            <person name="Bacik J.P."/>
        </authorList>
    </citation>
    <scope>NUCLEOTIDE SEQUENCE [GENOMIC DNA]</scope>
    <scope>VARIANTS SER-45; ASP-54; SER-239; TYR-243 AND ARG-394</scope>
    <source>
        <strain>Wpg1</strain>
        <strain>Wpg10</strain>
        <strain>Wpg11</strain>
        <strain>Wpg12</strain>
        <strain>Wpg13</strain>
        <strain>Wpg14</strain>
        <strain>Wpg15</strain>
        <strain>Wpg16</strain>
        <strain>Wpg2</strain>
        <strain>Wpg3</strain>
        <strain>Wpg4</strain>
        <strain>Wpg5</strain>
        <strain>Wpg6</strain>
        <strain>Wpg7</strain>
        <strain>Wpg8</strain>
        <strain>Wpg9</strain>
        <strain>Zim10</strain>
        <strain>Zim18</strain>
        <strain>Zim22</strain>
        <strain>Zim32</strain>
        <strain>Zim35</strain>
        <strain>Zim49</strain>
        <strain>Zim5</strain>
        <strain>Zim7</strain>
    </source>
</reference>
<reference key="4">
    <citation type="journal article" date="2000" name="Science">
        <title>The genome sequence of Drosophila melanogaster.</title>
        <authorList>
            <person name="Adams M.D."/>
            <person name="Celniker S.E."/>
            <person name="Holt R.A."/>
            <person name="Evans C.A."/>
            <person name="Gocayne J.D."/>
            <person name="Amanatides P.G."/>
            <person name="Scherer S.E."/>
            <person name="Li P.W."/>
            <person name="Hoskins R.A."/>
            <person name="Galle R.F."/>
            <person name="George R.A."/>
            <person name="Lewis S.E."/>
            <person name="Richards S."/>
            <person name="Ashburner M."/>
            <person name="Henderson S.N."/>
            <person name="Sutton G.G."/>
            <person name="Wortman J.R."/>
            <person name="Yandell M.D."/>
            <person name="Zhang Q."/>
            <person name="Chen L.X."/>
            <person name="Brandon R.C."/>
            <person name="Rogers Y.-H.C."/>
            <person name="Blazej R.G."/>
            <person name="Champe M."/>
            <person name="Pfeiffer B.D."/>
            <person name="Wan K.H."/>
            <person name="Doyle C."/>
            <person name="Baxter E.G."/>
            <person name="Helt G."/>
            <person name="Nelson C.R."/>
            <person name="Miklos G.L.G."/>
            <person name="Abril J.F."/>
            <person name="Agbayani A."/>
            <person name="An H.-J."/>
            <person name="Andrews-Pfannkoch C."/>
            <person name="Baldwin D."/>
            <person name="Ballew R.M."/>
            <person name="Basu A."/>
            <person name="Baxendale J."/>
            <person name="Bayraktaroglu L."/>
            <person name="Beasley E.M."/>
            <person name="Beeson K.Y."/>
            <person name="Benos P.V."/>
            <person name="Berman B.P."/>
            <person name="Bhandari D."/>
            <person name="Bolshakov S."/>
            <person name="Borkova D."/>
            <person name="Botchan M.R."/>
            <person name="Bouck J."/>
            <person name="Brokstein P."/>
            <person name="Brottier P."/>
            <person name="Burtis K.C."/>
            <person name="Busam D.A."/>
            <person name="Butler H."/>
            <person name="Cadieu E."/>
            <person name="Center A."/>
            <person name="Chandra I."/>
            <person name="Cherry J.M."/>
            <person name="Cawley S."/>
            <person name="Dahlke C."/>
            <person name="Davenport L.B."/>
            <person name="Davies P."/>
            <person name="de Pablos B."/>
            <person name="Delcher A."/>
            <person name="Deng Z."/>
            <person name="Mays A.D."/>
            <person name="Dew I."/>
            <person name="Dietz S.M."/>
            <person name="Dodson K."/>
            <person name="Doup L.E."/>
            <person name="Downes M."/>
            <person name="Dugan-Rocha S."/>
            <person name="Dunkov B.C."/>
            <person name="Dunn P."/>
            <person name="Durbin K.J."/>
            <person name="Evangelista C.C."/>
            <person name="Ferraz C."/>
            <person name="Ferriera S."/>
            <person name="Fleischmann W."/>
            <person name="Fosler C."/>
            <person name="Gabrielian A.E."/>
            <person name="Garg N.S."/>
            <person name="Gelbart W.M."/>
            <person name="Glasser K."/>
            <person name="Glodek A."/>
            <person name="Gong F."/>
            <person name="Gorrell J.H."/>
            <person name="Gu Z."/>
            <person name="Guan P."/>
            <person name="Harris M."/>
            <person name="Harris N.L."/>
            <person name="Harvey D.A."/>
            <person name="Heiman T.J."/>
            <person name="Hernandez J.R."/>
            <person name="Houck J."/>
            <person name="Hostin D."/>
            <person name="Houston K.A."/>
            <person name="Howland T.J."/>
            <person name="Wei M.-H."/>
            <person name="Ibegwam C."/>
            <person name="Jalali M."/>
            <person name="Kalush F."/>
            <person name="Karpen G.H."/>
            <person name="Ke Z."/>
            <person name="Kennison J.A."/>
            <person name="Ketchum K.A."/>
            <person name="Kimmel B.E."/>
            <person name="Kodira C.D."/>
            <person name="Kraft C.L."/>
            <person name="Kravitz S."/>
            <person name="Kulp D."/>
            <person name="Lai Z."/>
            <person name="Lasko P."/>
            <person name="Lei Y."/>
            <person name="Levitsky A.A."/>
            <person name="Li J.H."/>
            <person name="Li Z."/>
            <person name="Liang Y."/>
            <person name="Lin X."/>
            <person name="Liu X."/>
            <person name="Mattei B."/>
            <person name="McIntosh T.C."/>
            <person name="McLeod M.P."/>
            <person name="McPherson D."/>
            <person name="Merkulov G."/>
            <person name="Milshina N.V."/>
            <person name="Mobarry C."/>
            <person name="Morris J."/>
            <person name="Moshrefi A."/>
            <person name="Mount S.M."/>
            <person name="Moy M."/>
            <person name="Murphy B."/>
            <person name="Murphy L."/>
            <person name="Muzny D.M."/>
            <person name="Nelson D.L."/>
            <person name="Nelson D.R."/>
            <person name="Nelson K.A."/>
            <person name="Nixon K."/>
            <person name="Nusskern D.R."/>
            <person name="Pacleb J.M."/>
            <person name="Palazzolo M."/>
            <person name="Pittman G.S."/>
            <person name="Pan S."/>
            <person name="Pollard J."/>
            <person name="Puri V."/>
            <person name="Reese M.G."/>
            <person name="Reinert K."/>
            <person name="Remington K."/>
            <person name="Saunders R.D.C."/>
            <person name="Scheeler F."/>
            <person name="Shen H."/>
            <person name="Shue B.C."/>
            <person name="Siden-Kiamos I."/>
            <person name="Simpson M."/>
            <person name="Skupski M.P."/>
            <person name="Smith T.J."/>
            <person name="Spier E."/>
            <person name="Spradling A.C."/>
            <person name="Stapleton M."/>
            <person name="Strong R."/>
            <person name="Sun E."/>
            <person name="Svirskas R."/>
            <person name="Tector C."/>
            <person name="Turner R."/>
            <person name="Venter E."/>
            <person name="Wang A.H."/>
            <person name="Wang X."/>
            <person name="Wang Z.-Y."/>
            <person name="Wassarman D.A."/>
            <person name="Weinstock G.M."/>
            <person name="Weissenbach J."/>
            <person name="Williams S.M."/>
            <person name="Woodage T."/>
            <person name="Worley K.C."/>
            <person name="Wu D."/>
            <person name="Yang S."/>
            <person name="Yao Q.A."/>
            <person name="Ye J."/>
            <person name="Yeh R.-F."/>
            <person name="Zaveri J.S."/>
            <person name="Zhan M."/>
            <person name="Zhang G."/>
            <person name="Zhao Q."/>
            <person name="Zheng L."/>
            <person name="Zheng X.H."/>
            <person name="Zhong F.N."/>
            <person name="Zhong W."/>
            <person name="Zhou X."/>
            <person name="Zhu S.C."/>
            <person name="Zhu X."/>
            <person name="Smith H.O."/>
            <person name="Gibbs R.A."/>
            <person name="Myers E.W."/>
            <person name="Rubin G.M."/>
            <person name="Venter J.C."/>
        </authorList>
    </citation>
    <scope>NUCLEOTIDE SEQUENCE [LARGE SCALE GENOMIC DNA]</scope>
    <source>
        <strain>Berkeley</strain>
    </source>
</reference>
<reference key="5">
    <citation type="journal article" date="2002" name="Genome Biol.">
        <title>Annotation of the Drosophila melanogaster euchromatic genome: a systematic review.</title>
        <authorList>
            <person name="Misra S."/>
            <person name="Crosby M.A."/>
            <person name="Mungall C.J."/>
            <person name="Matthews B.B."/>
            <person name="Campbell K.S."/>
            <person name="Hradecky P."/>
            <person name="Huang Y."/>
            <person name="Kaminker J.S."/>
            <person name="Millburn G.H."/>
            <person name="Prochnik S.E."/>
            <person name="Smith C.D."/>
            <person name="Tupy J.L."/>
            <person name="Whitfield E.J."/>
            <person name="Bayraktaroglu L."/>
            <person name="Berman B.P."/>
            <person name="Bettencourt B.R."/>
            <person name="Celniker S.E."/>
            <person name="de Grey A.D.N.J."/>
            <person name="Drysdale R.A."/>
            <person name="Harris N.L."/>
            <person name="Richter J."/>
            <person name="Russo S."/>
            <person name="Schroeder A.J."/>
            <person name="Shu S.Q."/>
            <person name="Stapleton M."/>
            <person name="Yamada C."/>
            <person name="Ashburner M."/>
            <person name="Gelbart W.M."/>
            <person name="Rubin G.M."/>
            <person name="Lewis S.E."/>
        </authorList>
    </citation>
    <scope>GENOME REANNOTATION</scope>
    <source>
        <strain>Berkeley</strain>
    </source>
</reference>
<reference key="6">
    <citation type="journal article" date="2002" name="Genome Biol.">
        <title>A Drosophila full-length cDNA resource.</title>
        <authorList>
            <person name="Stapleton M."/>
            <person name="Carlson J.W."/>
            <person name="Brokstein P."/>
            <person name="Yu C."/>
            <person name="Champe M."/>
            <person name="George R.A."/>
            <person name="Guarin H."/>
            <person name="Kronmiller B."/>
            <person name="Pacleb J.M."/>
            <person name="Park S."/>
            <person name="Wan K.H."/>
            <person name="Rubin G.M."/>
            <person name="Celniker S.E."/>
        </authorList>
    </citation>
    <scope>NUCLEOTIDE SEQUENCE [LARGE SCALE MRNA]</scope>
    <source>
        <strain>Berkeley</strain>
        <tissue>Embryo</tissue>
    </source>
</reference>
<reference key="7">
    <citation type="journal article" date="1997" name="Development">
        <title>bag-of-marbles and benign gonial cell neoplasm act in the germline to restrict proliferation during Drosophila spermatogenesis.</title>
        <authorList>
            <person name="Goenczy P."/>
            <person name="Matunis E."/>
            <person name="DiNardo S."/>
        </authorList>
    </citation>
    <scope>FUNCTION</scope>
    <scope>DISRUPTION PHENOTYPE</scope>
</reference>
<reference key="8">
    <citation type="journal article" date="2009" name="Proc. Natl. Acad. Sci. U.S.A.">
        <title>Bam and Bgcn antagonize Nanos-dependent germ-line stem cell maintenance.</title>
        <authorList>
            <person name="Li Y."/>
            <person name="Minor N.T."/>
            <person name="Park J.K."/>
            <person name="McKearin D.M."/>
            <person name="Maines J.Z."/>
        </authorList>
    </citation>
    <scope>INTERACTION WITH BGCN</scope>
</reference>
<reference key="9">
    <citation type="journal article" date="2009" name="Proc. Natl. Acad. Sci. U.S.A.">
        <title>eIF4A controls germline stem cell self-renewal by directly inhibiting BAM function in the Drosophila ovary.</title>
        <authorList>
            <person name="Shen R."/>
            <person name="Weng C."/>
            <person name="Yu J."/>
            <person name="Xie T."/>
        </authorList>
    </citation>
    <scope>FUNCTION</scope>
    <scope>INTERACTION WITH EIF4A AND BGCN</scope>
</reference>
<reference key="10">
    <citation type="journal article" date="2009" name="Proc. Natl. Acad. Sci. U.S.A.">
        <title>Accumulation of a differentiation regulator specifies transit amplifying division number in an adult stem cell lineage.</title>
        <authorList>
            <person name="Insco M.L."/>
            <person name="Leon A."/>
            <person name="Tam C.H."/>
            <person name="McKearin D.M."/>
            <person name="Fuller M.T."/>
        </authorList>
    </citation>
    <scope>FUNCTION</scope>
    <scope>SUBCELLULAR LOCATION</scope>
    <scope>DEVELOPMENTAL STAGE</scope>
    <scope>DOMAIN PEST</scope>
    <scope>DISRUPTION PHENOTYPE</scope>
</reference>
<reference key="11">
    <citation type="journal article" date="2012" name="Cell Stem Cell">
        <title>A self-limiting switch based on translational control regulates the transition from proliferation to differentiation in an adult stem cell lineage.</title>
        <authorList>
            <person name="Insco M.L."/>
            <person name="Bailey A.S."/>
            <person name="Kim J."/>
            <person name="Olivares G.H."/>
            <person name="Wapinski O.L."/>
            <person name="Tam C.H."/>
            <person name="Fuller M.T."/>
        </authorList>
    </citation>
    <scope>FUNCTION</scope>
    <scope>INTERACTION WITH BGCN</scope>
    <scope>TISSUE SPECIFICITY</scope>
</reference>
<reference key="12">
    <citation type="journal article" date="2013" name="PLoS ONE">
        <title>Mei-p26 cooperates with Bam, Bgcn and Sxl to promote early germline development in the Drosophila ovary.</title>
        <authorList>
            <person name="Li Y."/>
            <person name="Zhang Q."/>
            <person name="Carreira-Rosario A."/>
            <person name="Maines J.Z."/>
            <person name="McKearin D.M."/>
            <person name="Buszczak M."/>
        </authorList>
    </citation>
    <scope>IDENTIFICATION IN MEI-P26-BAM-BGCN-SXL COMPLEX</scope>
    <scope>INTERACTION WITH BGCN</scope>
    <scope>DEVELOPMENTAL STAGE</scope>
</reference>
<reference key="13">
    <citation type="journal article" date="2014" name="PLoS Genet.">
        <title>Three RNA binding proteins form a complex to promote differentiation of germline stem cell lineage in Drosophila.</title>
        <authorList>
            <person name="Chen D."/>
            <person name="Wu C."/>
            <person name="Zhao S."/>
            <person name="Geng Q."/>
            <person name="Gao Y."/>
            <person name="Li X."/>
            <person name="Zhang Y."/>
            <person name="Wang Z."/>
        </authorList>
    </citation>
    <scope>FUNCTION</scope>
    <scope>INTERACTION WITH BGCN AND TUT</scope>
    <scope>SUBCELLULAR LOCATION</scope>
    <scope>DEVELOPMENTAL STAGE</scope>
</reference>
<reference key="14">
    <citation type="journal article" date="2017" name="J. Genet. Genomics">
        <title>Regulators of alternative polyadenylation operate at the transition from mitosis to meiosis.</title>
        <authorList>
            <person name="Shan L."/>
            <person name="Wu C."/>
            <person name="Chen D."/>
            <person name="Hou L."/>
            <person name="Li X."/>
            <person name="Wang L."/>
            <person name="Chu X."/>
            <person name="Hou Y."/>
            <person name="Wang Z."/>
        </authorList>
    </citation>
    <scope>FUNCTION</scope>
    <scope>INTERACTION WITH BGCN; TUT AND TWIN</scope>
</reference>
<reference key="15">
    <citation type="journal article" date="2017" name="Proc. Natl. Acad. Sci. U.S.A.">
        <title>Bam-dependent deubiquitinase complex can disrupt germ-line stem cell maintenance by targeting cyclin A.</title>
        <authorList>
            <person name="Ji S."/>
            <person name="Li C."/>
            <person name="Hu L."/>
            <person name="Liu K."/>
            <person name="Mei J."/>
            <person name="Luo Y."/>
            <person name="Tao Y."/>
            <person name="Xia Z."/>
            <person name="Sun Q."/>
            <person name="Chen D."/>
        </authorList>
    </citation>
    <scope>FUNCTION</scope>
    <scope>INTERACTION WITH OTU; UBIQUITIN AND CYCA</scope>
    <scope>UBIQUITINATION</scope>
</reference>
<reference key="16">
    <citation type="journal article" date="2019" name="Mol. Cell">
        <title>LC Domain-Mediated Coalescence Is Essential for Otu Enzymatic Activity to Extend Drosophila Lifespan.</title>
        <authorList>
            <person name="Ji S."/>
            <person name="Luo Y."/>
            <person name="Cai Q."/>
            <person name="Cao Z."/>
            <person name="Zhao Y."/>
            <person name="Mei J."/>
            <person name="Li C."/>
            <person name="Xia P."/>
            <person name="Xie Z."/>
            <person name="Xia Z."/>
            <person name="Zhang J."/>
            <person name="Sun Q."/>
            <person name="Chen D."/>
        </authorList>
    </citation>
    <scope>FUNCTION</scope>
    <scope>INTERACTION WITH OTU AND TRAF6</scope>
    <scope>TISSUE SPECIFICITY</scope>
    <scope>INDUCTION BY IMD SIGNALING</scope>
    <scope>DISRUPTION PHENOTYPE</scope>
</reference>
<reference key="17">
    <citation type="journal article" date="2020" name="Development">
        <title>WD40 protein Wuho controls germline homeostasis via TRIM-NHL tumor suppressor Mei-p26 in Drosophila.</title>
        <authorList>
            <person name="Rastegari E."/>
            <person name="Kajal K."/>
            <person name="Tan B.S."/>
            <person name="Huang F."/>
            <person name="Chen R.H."/>
            <person name="Hsieh T.S."/>
            <person name="Hsu H.J."/>
        </authorList>
    </citation>
    <scope>DEVELOPMENTAL STAGE</scope>
</reference>
<comment type="function">
    <text evidence="3 4 5 6 7 9 10 11 12 14">Regulatory component of a deubiquitinase complex consisting of bam and otu (PubMed:28484036). The complex deubiquitinates K63-linked polyubiquitinated proteins, antagonizing the ubiquitination activity of Traf6 and regulating the IMD immune signaling pathway (PubMed:30879902). Otu-bam deubiquitinase activity is regulated by Traf6 dependent immune signaling regulation of bam expression levels; this forms a feedback loop that regulates the IMD immune signaling pathway and balances gut immune activity during aging (PubMed:30879902). The complex deubiquitinates and stabilizes CycA/cyclin-A to regulate CycA-dependent differentiation (PubMed:28484036). Required to initiate both male and female gametogenesis (PubMed:2279698). Part of a complex with bgcn involved in 3'-UTR-dependent translational repression of a subset of mRNAs, including those for mei-P26, nanos and shg/E-cadherin (PubMed:19470484, PubMed:19556547, PubMed:23122292). Repression of mei-P26 is targeted by let-7 miRNA (PubMed:23122292). Involved in a regulatory cascade with mei-P26 to control the progression of cystocytes through transit amplification and the switch to spermatocyte differentiation; mei-P26 facilitates bam accumulation, which in turn represses translation of mei-P26 (PubMed:19470484, PubMed:20018708, PubMed:2279698, PubMed:23122292, PubMed:28484036, PubMed:9334284). Forms a complex with tut and bgcn involved in 3'-UTR-dependent post-transcriptional repression of several 3'-RNA processing factors, which promotes germline stem cell lineage differentiation and mitosis-to-meiosis transition (PubMed:25412508, PubMed:28190776).</text>
</comment>
<comment type="subunit">
    <text evidence="3 4 7 8 9 10 11 12">Interacts (via central region) with ubiquitin (PubMed:28484036). Interacts (via C-terminus) with otu (via OTU domain); the interaction enhances otu aggregation into amyloid-like structures and enhances its deubiquitinase activity (PubMed:28484036, PubMed:30879902). Together with otu interacts with CycA/cyclin-A (via C-terminus); the interaction stabilizes CycA by promoting and enhancing otu dependent deubiquitination of CycA (PubMed:28484036). Together with otu interacts with Traf6 (PubMed:30879902). Part of a complex composed of at least tut, bam and bgcn; complex formation does not require RNA (PubMed:25412508). Interacts (via C-terminus) with bgcn; the interaction is direct and is not disrupted by eIF4A (PubMed:19470484, PubMed:19556547, PubMed:23122292, PubMed:23526974, PubMed:25412508). Interacts with eIF4A (via multiple contacts); the interaction is direct and is not disrupted by bgcn (PubMed:19556547). Interacts (via N-terminus) with tut; the interaction is direct and mediates the interaction between tut and bgcn (PubMed:25412508). As part of the bam-bgcn-tut complex associates with twin; may recruit the CCR4-NOT1 deadenylation complex to mRNA 3'-UTRs to mediate post-transcriptional regulation of expression (PubMed:28190776). Part of a complex composed of at least mei-P26, bam, bgcn and Sxl; this complex is involved in translational repression of nanos mRNA (PubMed:23526974).</text>
</comment>
<comment type="interaction">
    <interactant intactId="EBI-88504">
        <id>P22745</id>
    </interactant>
    <interactant intactId="EBI-142483">
        <id>Q9W1I2</id>
        <label>bgcn</label>
    </interactant>
    <organismsDiffer>false</organismsDiffer>
    <experiments>13</experiments>
</comment>
<comment type="interaction">
    <interactant intactId="EBI-88504">
        <id>P22745</id>
    </interactant>
    <interactant intactId="EBI-141466">
        <id>Q9V345</id>
        <label>CSN4</label>
    </interactant>
    <organismsDiffer>false</organismsDiffer>
    <experiments>5</experiments>
</comment>
<comment type="interaction">
    <interactant intactId="EBI-88504">
        <id>P22745</id>
    </interactant>
    <interactant intactId="EBI-85570">
        <id>Q02748</id>
        <label>eIF4A</label>
    </interactant>
    <organismsDiffer>false</organismsDiffer>
    <experiments>4</experiments>
</comment>
<comment type="subcellular location">
    <subcellularLocation>
        <location evidence="5 9">Cytoplasm</location>
    </subcellularLocation>
</comment>
<comment type="tissue specificity">
    <text evidence="6 7 12">In cystoblasts and/or very early cystocytes in testis (at protein level); expression levels are regulated by mei-P26 (PubMed:2279698, PubMed:23122292). In cystoblasts and/or very early cystocytes in ovary (PubMed:2279698). Expressed in the gut; expression levels increase with age (PubMed:30879902).</text>
</comment>
<comment type="developmental stage">
    <text evidence="5 8 9 13">During spermatogenesis protein accumulates in cystocytes undergoing transit amplification (at protein level); detectable in 4-, 8- and early 16-cell cysts (PubMed:20018708, PubMed:25412508). Expression drops off rapidly in 16-cell cysts after premeiotic DNA replication (at protein level) (PubMed:20018708). During oogenesis protein accumulates in cystocytes undergoing transit amplification; detectable in early 2-, 4- and 8-cell cysts and decreasing as cysts progress through the germarium; expression levels are regulated by wh/wuho, possibly in collaboration with mei-P26 (PubMed:23526974, PubMed:31941704).</text>
</comment>
<comment type="induction">
    <text evidence="12">Induced by Traf6, possibly in response to activation of the IMD immune signaling pathway (PubMed:30879902). Expression levels increase with age, possibly in response to inflammation induced activation of the IMD pathway (PubMed:30879902).</text>
</comment>
<comment type="domain">
    <text evidence="5">May possess a C-terminal PEST sequence (rich in Pro, Glu, Ser and Thr) targeting it for degradation and rapid protein turnover.</text>
</comment>
<comment type="PTM">
    <text evidence="11">Ubiquitinated (C-terminal region).</text>
</comment>
<comment type="disruption phenotype">
    <text evidence="5 6 12 14">Viable, but males and females are sterile (PubMed:2279698). Flies exhibit abnormal cysts containing an excess number of cells undergoing transit amplification, which do not differentiate into gametes (PubMed:20018708, PubMed:2279698, PubMed:9334284). Conditional RNAi-mediated knockdown in intestinal cells reduces adult lifespan due to severe age-dependent dysfunction of the intestinal barrier (PubMed:30879902).</text>
</comment>
<accession>P22745</accession>
<accession>Q2PNQ8</accession>
<accession>Q2PNQ9</accession>
<accession>Q2PNR5</accession>
<accession>Q2PNR8</accession>
<accession>Q2PNR9</accession>
<accession>Q2PNS3</accession>
<accession>Q2PNS6</accession>
<accession>Q2PNS8</accession>
<accession>Q2PNT1</accession>
<accession>Q8MRX8</accession>
<accession>Q9VBV0</accession>
<feature type="chain" id="PRO_0000064821" description="Protein bag of marbles">
    <location>
        <begin position="1"/>
        <end position="442"/>
    </location>
</feature>
<feature type="region of interest" description="Required for interaction with ubiquitin" evidence="11">
    <location>
        <begin position="201"/>
        <end position="250"/>
    </location>
</feature>
<feature type="region of interest" description="Disordered" evidence="1">
    <location>
        <begin position="408"/>
        <end position="442"/>
    </location>
</feature>
<feature type="compositionally biased region" description="Acidic residues" evidence="1">
    <location>
        <begin position="416"/>
        <end position="425"/>
    </location>
</feature>
<feature type="compositionally biased region" description="Basic residues" evidence="1">
    <location>
        <begin position="433"/>
        <end position="442"/>
    </location>
</feature>
<feature type="sequence variant" description="In strain: Wpg6, Wpg8 and Wpg12." evidence="2">
    <original>C</original>
    <variation>S</variation>
    <location>
        <position position="45"/>
    </location>
</feature>
<feature type="sequence variant" description="In strain: Zim10." evidence="2">
    <original>G</original>
    <variation>D</variation>
    <location>
        <position position="54"/>
    </location>
</feature>
<feature type="sequence variant" description="In strain: fs(3)Neo61, Wpg1, Wpg10, Wpg16, Wpg2, Wpg3, Zim10, Zim18, Zim32 and Zim35." evidence="2 6">
    <original>A</original>
    <variation>S</variation>
    <location>
        <position position="239"/>
    </location>
</feature>
<feature type="sequence variant" description="In strain: Wpg4." evidence="2">
    <original>F</original>
    <variation>Y</variation>
    <location>
        <position position="243"/>
    </location>
</feature>
<feature type="sequence variant" description="In strain: Zim10." evidence="2">
    <original>P</original>
    <variation>R</variation>
    <location>
        <position position="394"/>
    </location>
</feature>
<feature type="sequence conflict" description="In Ref. 1; CAA39662." evidence="15" ref="1">
    <original>R</original>
    <variation>A</variation>
    <location>
        <position position="439"/>
    </location>
</feature>
<feature type="helix" evidence="18">
    <location>
        <begin position="14"/>
        <end position="33"/>
    </location>
</feature>
<proteinExistence type="evidence at protein level"/>
<dbReference type="EMBL" id="X56202">
    <property type="protein sequence ID" value="CAA39662.1"/>
    <property type="molecule type" value="Genomic_DNA"/>
</dbReference>
<dbReference type="EMBL" id="DQ315978">
    <property type="protein sequence ID" value="ABC48725.1"/>
    <property type="molecule type" value="Genomic_DNA"/>
</dbReference>
<dbReference type="EMBL" id="DQ315979">
    <property type="protein sequence ID" value="ABC48726.1"/>
    <property type="molecule type" value="Genomic_DNA"/>
</dbReference>
<dbReference type="EMBL" id="DQ315980">
    <property type="protein sequence ID" value="ABC48727.1"/>
    <property type="molecule type" value="Genomic_DNA"/>
</dbReference>
<dbReference type="EMBL" id="DQ315981">
    <property type="protein sequence ID" value="ABC48728.1"/>
    <property type="molecule type" value="Genomic_DNA"/>
</dbReference>
<dbReference type="EMBL" id="DQ315982">
    <property type="protein sequence ID" value="ABC48729.1"/>
    <property type="molecule type" value="Genomic_DNA"/>
</dbReference>
<dbReference type="EMBL" id="DQ315983">
    <property type="protein sequence ID" value="ABC48730.1"/>
    <property type="molecule type" value="Genomic_DNA"/>
</dbReference>
<dbReference type="EMBL" id="DQ315984">
    <property type="protein sequence ID" value="ABC48731.1"/>
    <property type="molecule type" value="Genomic_DNA"/>
</dbReference>
<dbReference type="EMBL" id="DQ315985">
    <property type="protein sequence ID" value="ABC48732.1"/>
    <property type="molecule type" value="Genomic_DNA"/>
</dbReference>
<dbReference type="EMBL" id="DQ315986">
    <property type="protein sequence ID" value="ABC48733.1"/>
    <property type="molecule type" value="Genomic_DNA"/>
</dbReference>
<dbReference type="EMBL" id="DQ315987">
    <property type="protein sequence ID" value="ABC48734.1"/>
    <property type="molecule type" value="Genomic_DNA"/>
</dbReference>
<dbReference type="EMBL" id="DQ315988">
    <property type="protein sequence ID" value="ABC48735.1"/>
    <property type="molecule type" value="Genomic_DNA"/>
</dbReference>
<dbReference type="EMBL" id="DQ315989">
    <property type="protein sequence ID" value="ABC48736.1"/>
    <property type="molecule type" value="Genomic_DNA"/>
</dbReference>
<dbReference type="EMBL" id="DQ315990">
    <property type="protein sequence ID" value="ABC48737.1"/>
    <property type="molecule type" value="Genomic_DNA"/>
</dbReference>
<dbReference type="EMBL" id="DQ315991">
    <property type="protein sequence ID" value="ABC48738.1"/>
    <property type="molecule type" value="Genomic_DNA"/>
</dbReference>
<dbReference type="EMBL" id="DQ315992">
    <property type="protein sequence ID" value="ABC48739.1"/>
    <property type="molecule type" value="Genomic_DNA"/>
</dbReference>
<dbReference type="EMBL" id="DQ315993">
    <property type="protein sequence ID" value="ABC48740.1"/>
    <property type="molecule type" value="Genomic_DNA"/>
</dbReference>
<dbReference type="EMBL" id="DQ315994">
    <property type="protein sequence ID" value="ABC48741.1"/>
    <property type="molecule type" value="Genomic_DNA"/>
</dbReference>
<dbReference type="EMBL" id="DQ315995">
    <property type="protein sequence ID" value="ABC48742.1"/>
    <property type="molecule type" value="Genomic_DNA"/>
</dbReference>
<dbReference type="EMBL" id="DQ315996">
    <property type="protein sequence ID" value="ABC48743.1"/>
    <property type="molecule type" value="Genomic_DNA"/>
</dbReference>
<dbReference type="EMBL" id="DQ315997">
    <property type="protein sequence ID" value="ABC48744.1"/>
    <property type="molecule type" value="Genomic_DNA"/>
</dbReference>
<dbReference type="EMBL" id="DQ315998">
    <property type="protein sequence ID" value="ABC48745.1"/>
    <property type="molecule type" value="Genomic_DNA"/>
</dbReference>
<dbReference type="EMBL" id="DQ315999">
    <property type="protein sequence ID" value="ABC48746.1"/>
    <property type="molecule type" value="Genomic_DNA"/>
</dbReference>
<dbReference type="EMBL" id="DQ316000">
    <property type="protein sequence ID" value="ABC48747.1"/>
    <property type="molecule type" value="Genomic_DNA"/>
</dbReference>
<dbReference type="EMBL" id="DQ316001">
    <property type="protein sequence ID" value="ABC48748.1"/>
    <property type="molecule type" value="Genomic_DNA"/>
</dbReference>
<dbReference type="EMBL" id="AE014297">
    <property type="protein sequence ID" value="AAF56427.1"/>
    <property type="molecule type" value="Genomic_DNA"/>
</dbReference>
<dbReference type="EMBL" id="AY119208">
    <property type="protein sequence ID" value="AAM51068.1"/>
    <property type="molecule type" value="mRNA"/>
</dbReference>
<dbReference type="PIR" id="A36469">
    <property type="entry name" value="A36469"/>
</dbReference>
<dbReference type="RefSeq" id="NP_476800.1">
    <property type="nucleotide sequence ID" value="NM_057452.4"/>
</dbReference>
<dbReference type="PDB" id="5ONA">
    <property type="method" value="X-ray"/>
    <property type="resolution" value="2.70 A"/>
    <property type="chains" value="C/F=13-36"/>
</dbReference>
<dbReference type="PDB" id="5ONB">
    <property type="method" value="X-ray"/>
    <property type="resolution" value="3.00 A"/>
    <property type="chains" value="B/D/F/H=13-36"/>
</dbReference>
<dbReference type="PDB" id="9FL8">
    <property type="method" value="X-ray"/>
    <property type="resolution" value="2.64 A"/>
    <property type="chains" value="F/G=17-33"/>
</dbReference>
<dbReference type="PDBsum" id="5ONA"/>
<dbReference type="PDBsum" id="5ONB"/>
<dbReference type="PDBsum" id="9FL8"/>
<dbReference type="SMR" id="P22745"/>
<dbReference type="BioGRID" id="67957">
    <property type="interactions" value="46"/>
</dbReference>
<dbReference type="DIP" id="DIP-48889N"/>
<dbReference type="FunCoup" id="P22745">
    <property type="interactions" value="119"/>
</dbReference>
<dbReference type="IntAct" id="P22745">
    <property type="interactions" value="3"/>
</dbReference>
<dbReference type="STRING" id="7227.FBpp0084243"/>
<dbReference type="PaxDb" id="7227-FBpp0084243"/>
<dbReference type="DNASU" id="43038"/>
<dbReference type="EnsemblMetazoa" id="FBtr0084869">
    <property type="protein sequence ID" value="FBpp0084243"/>
    <property type="gene ID" value="FBgn0000158"/>
</dbReference>
<dbReference type="GeneID" id="43038"/>
<dbReference type="KEGG" id="dme:Dmel_CG10422"/>
<dbReference type="AGR" id="FB:FBgn0000158"/>
<dbReference type="CTD" id="43038"/>
<dbReference type="FlyBase" id="FBgn0000158">
    <property type="gene designation" value="bam"/>
</dbReference>
<dbReference type="VEuPathDB" id="VectorBase:FBgn0000158"/>
<dbReference type="eggNOG" id="ENOG502TB7D">
    <property type="taxonomic scope" value="Eukaryota"/>
</dbReference>
<dbReference type="HOGENOM" id="CLU_644469_0_0_1"/>
<dbReference type="InParanoid" id="P22745"/>
<dbReference type="OMA" id="FNWEMDL"/>
<dbReference type="OrthoDB" id="7920838at2759"/>
<dbReference type="PhylomeDB" id="P22745"/>
<dbReference type="SignaLink" id="P22745"/>
<dbReference type="BioGRID-ORCS" id="43038">
    <property type="hits" value="0 hits in 1 CRISPR screen"/>
</dbReference>
<dbReference type="GenomeRNAi" id="43038"/>
<dbReference type="PRO" id="PR:P22745"/>
<dbReference type="Proteomes" id="UP000000803">
    <property type="component" value="Chromosome 3R"/>
</dbReference>
<dbReference type="Bgee" id="FBgn0000158">
    <property type="expression patterns" value="Expressed in cleaving embryo and 15 other cell types or tissues"/>
</dbReference>
<dbReference type="ExpressionAtlas" id="P22745">
    <property type="expression patterns" value="baseline and differential"/>
</dbReference>
<dbReference type="GO" id="GO:0005737">
    <property type="term" value="C:cytoplasm"/>
    <property type="evidence" value="ECO:0000314"/>
    <property type="project" value="FlyBase"/>
</dbReference>
<dbReference type="GO" id="GO:0045169">
    <property type="term" value="C:fusome"/>
    <property type="evidence" value="ECO:0000314"/>
    <property type="project" value="FlyBase"/>
</dbReference>
<dbReference type="GO" id="GO:0045170">
    <property type="term" value="C:spectrosome"/>
    <property type="evidence" value="ECO:0000314"/>
    <property type="project" value="FlyBase"/>
</dbReference>
<dbReference type="GO" id="GO:0003730">
    <property type="term" value="F:mRNA 3'-UTR binding"/>
    <property type="evidence" value="ECO:0000314"/>
    <property type="project" value="FlyBase"/>
</dbReference>
<dbReference type="GO" id="GO:0000900">
    <property type="term" value="F:mRNA regulatory element binding translation repressor activity"/>
    <property type="evidence" value="ECO:0000314"/>
    <property type="project" value="FlyBase"/>
</dbReference>
<dbReference type="GO" id="GO:0043130">
    <property type="term" value="F:ubiquitin binding"/>
    <property type="evidence" value="ECO:0000314"/>
    <property type="project" value="FlyBase"/>
</dbReference>
<dbReference type="GO" id="GO:0035212">
    <property type="term" value="P:cell competition in a multicellular organism"/>
    <property type="evidence" value="ECO:0000315"/>
    <property type="project" value="FlyBase"/>
</dbReference>
<dbReference type="GO" id="GO:0007282">
    <property type="term" value="P:cystoblast division"/>
    <property type="evidence" value="ECO:0000315"/>
    <property type="project" value="FlyBase"/>
</dbReference>
<dbReference type="GO" id="GO:0048132">
    <property type="term" value="P:female germ-line stem cell asymmetric division"/>
    <property type="evidence" value="ECO:0000315"/>
    <property type="project" value="FlyBase"/>
</dbReference>
<dbReference type="GO" id="GO:0045478">
    <property type="term" value="P:fusome organization"/>
    <property type="evidence" value="ECO:0000315"/>
    <property type="project" value="FlyBase"/>
</dbReference>
<dbReference type="GO" id="GO:0007276">
    <property type="term" value="P:gamete generation"/>
    <property type="evidence" value="ECO:0000315"/>
    <property type="project" value="FlyBase"/>
</dbReference>
<dbReference type="GO" id="GO:0042078">
    <property type="term" value="P:germ-line stem cell division"/>
    <property type="evidence" value="ECO:0000315"/>
    <property type="project" value="FlyBase"/>
</dbReference>
<dbReference type="GO" id="GO:0030718">
    <property type="term" value="P:germ-line stem cell population maintenance"/>
    <property type="evidence" value="ECO:0000314"/>
    <property type="project" value="FlyBase"/>
</dbReference>
<dbReference type="GO" id="GO:0030727">
    <property type="term" value="P:germarium-derived female germ-line cyst formation"/>
    <property type="evidence" value="ECO:0000315"/>
    <property type="project" value="FlyBase"/>
</dbReference>
<dbReference type="GO" id="GO:0098730">
    <property type="term" value="P:male germline stem cell symmetric division"/>
    <property type="evidence" value="ECO:0000315"/>
    <property type="project" value="FlyBase"/>
</dbReference>
<dbReference type="GO" id="GO:0061060">
    <property type="term" value="P:negative regulation of peptidoglycan recognition protein signaling pathway"/>
    <property type="evidence" value="ECO:0000315"/>
    <property type="project" value="FlyBase"/>
</dbReference>
<dbReference type="GO" id="GO:0017148">
    <property type="term" value="P:negative regulation of translation"/>
    <property type="evidence" value="ECO:0000315"/>
    <property type="project" value="FlyBase"/>
</dbReference>
<dbReference type="GO" id="GO:0048477">
    <property type="term" value="P:oogenesis"/>
    <property type="evidence" value="ECO:0000315"/>
    <property type="project" value="FlyBase"/>
</dbReference>
<dbReference type="GO" id="GO:1903003">
    <property type="term" value="P:positive regulation of protein deubiquitination"/>
    <property type="evidence" value="ECO:0000315"/>
    <property type="project" value="FlyBase"/>
</dbReference>
<dbReference type="GO" id="GO:1903006">
    <property type="term" value="P:positive regulation of protein K63-linked deubiquitination"/>
    <property type="evidence" value="ECO:0000315"/>
    <property type="project" value="FlyBase"/>
</dbReference>
<dbReference type="GO" id="GO:0045880">
    <property type="term" value="P:positive regulation of smoothened signaling pathway"/>
    <property type="evidence" value="ECO:0000316"/>
    <property type="project" value="FlyBase"/>
</dbReference>
<dbReference type="GO" id="GO:2000738">
    <property type="term" value="P:positive regulation of stem cell differentiation"/>
    <property type="evidence" value="ECO:0000315"/>
    <property type="project" value="FlyBase"/>
</dbReference>
<dbReference type="GO" id="GO:0007283">
    <property type="term" value="P:spermatogenesis"/>
    <property type="evidence" value="ECO:0000315"/>
    <property type="project" value="FlyBase"/>
</dbReference>
<dbReference type="GO" id="GO:0007284">
    <property type="term" value="P:spermatogonial cell division"/>
    <property type="evidence" value="ECO:0000315"/>
    <property type="project" value="FlyBase"/>
</dbReference>
<name>BAM_DROME</name>
<organism evidence="17">
    <name type="scientific">Drosophila melanogaster</name>
    <name type="common">Fruit fly</name>
    <dbReference type="NCBI Taxonomy" id="7227"/>
    <lineage>
        <taxon>Eukaryota</taxon>
        <taxon>Metazoa</taxon>
        <taxon>Ecdysozoa</taxon>
        <taxon>Arthropoda</taxon>
        <taxon>Hexapoda</taxon>
        <taxon>Insecta</taxon>
        <taxon>Pterygota</taxon>
        <taxon>Neoptera</taxon>
        <taxon>Endopterygota</taxon>
        <taxon>Diptera</taxon>
        <taxon>Brachycera</taxon>
        <taxon>Muscomorpha</taxon>
        <taxon>Ephydroidea</taxon>
        <taxon>Drosophilidae</taxon>
        <taxon>Drosophila</taxon>
        <taxon>Sophophora</taxon>
    </lineage>
</organism>
<keyword id="KW-0002">3D-structure</keyword>
<keyword id="KW-0131">Cell cycle</keyword>
<keyword id="KW-0963">Cytoplasm</keyword>
<keyword id="KW-0217">Developmental protein</keyword>
<keyword id="KW-0221">Differentiation</keyword>
<keyword id="KW-0896">Oogenesis</keyword>
<keyword id="KW-1185">Reference proteome</keyword>
<keyword id="KW-0744">Spermatogenesis</keyword>
<keyword id="KW-0832">Ubl conjugation</keyword>
<keyword id="KW-0833">Ubl conjugation pathway</keyword>
<sequence length="442" mass="50275">MLNARDVCPEGNDDQQLDHNFKQMEEHLALMVEGNENEDPRKATCEYEDTNEDGATCTSGVLSEIQENFGRLRLCDVTAPLLEFHGLDCLQQIQKRSRHFAFDGSPAKKSRSGGVLVTGPKQKQLQKENVWNRKSKGSASADNIEKLPITIEKLHMIGLHGDCLEHNAVLRLMNLFRSLHDHLTADLGFSRQNSMPSDYLFDMPVKSTMPKSLNVRYQLQVLCTKVERFLVQQRRTLEANRHFDFEKYDECDKLLKGFASYLDNFKLLLKPKMRNRNGNSGSNADKFHTQRMERLLIGLRDWIKAAHLSVHVFNWEMDLEHRYSGAMTESHKSLNERAILLSGAELRAAEARGISAEDLFIAQRYKLGGPIYCVLEQHEFLSALIANPETYFPPSVVAICGPQKLGAVSMEQPSASEEEFEETEEVPSSPPRHTGRVPRFRS</sequence>